<evidence type="ECO:0000255" key="1">
    <source>
        <dbReference type="HAMAP-Rule" id="MF_00391"/>
    </source>
</evidence>
<evidence type="ECO:0000305" key="2"/>
<sequence>MKRTFQPSVLKRNRSHGFRARMATKNGRQVLARRRAKGRARLTVSK</sequence>
<protein>
    <recommendedName>
        <fullName evidence="1">Large ribosomal subunit protein bL34</fullName>
    </recommendedName>
    <alternativeName>
        <fullName evidence="2">50S ribosomal protein L34</fullName>
    </alternativeName>
</protein>
<dbReference type="EMBL" id="CP000036">
    <property type="protein sequence ID" value="ABB68152.1"/>
    <property type="molecule type" value="Genomic_DNA"/>
</dbReference>
<dbReference type="RefSeq" id="WP_000831330.1">
    <property type="nucleotide sequence ID" value="NC_007613.1"/>
</dbReference>
<dbReference type="SMR" id="Q31UV6"/>
<dbReference type="GeneID" id="98190980"/>
<dbReference type="KEGG" id="sbo:SBO_3674"/>
<dbReference type="HOGENOM" id="CLU_129938_2_1_6"/>
<dbReference type="Proteomes" id="UP000007067">
    <property type="component" value="Chromosome"/>
</dbReference>
<dbReference type="GO" id="GO:1990904">
    <property type="term" value="C:ribonucleoprotein complex"/>
    <property type="evidence" value="ECO:0007669"/>
    <property type="project" value="UniProtKB-KW"/>
</dbReference>
<dbReference type="GO" id="GO:0005840">
    <property type="term" value="C:ribosome"/>
    <property type="evidence" value="ECO:0007669"/>
    <property type="project" value="UniProtKB-KW"/>
</dbReference>
<dbReference type="GO" id="GO:0003735">
    <property type="term" value="F:structural constituent of ribosome"/>
    <property type="evidence" value="ECO:0007669"/>
    <property type="project" value="InterPro"/>
</dbReference>
<dbReference type="GO" id="GO:0006412">
    <property type="term" value="P:translation"/>
    <property type="evidence" value="ECO:0007669"/>
    <property type="project" value="UniProtKB-UniRule"/>
</dbReference>
<dbReference type="FunFam" id="1.10.287.3980:FF:000001">
    <property type="entry name" value="Mitochondrial ribosomal protein L34"/>
    <property type="match status" value="1"/>
</dbReference>
<dbReference type="Gene3D" id="1.10.287.3980">
    <property type="match status" value="1"/>
</dbReference>
<dbReference type="HAMAP" id="MF_00391">
    <property type="entry name" value="Ribosomal_bL34"/>
    <property type="match status" value="1"/>
</dbReference>
<dbReference type="InterPro" id="IPR000271">
    <property type="entry name" value="Ribosomal_bL34"/>
</dbReference>
<dbReference type="InterPro" id="IPR020939">
    <property type="entry name" value="Ribosomal_bL34_CS"/>
</dbReference>
<dbReference type="NCBIfam" id="TIGR01030">
    <property type="entry name" value="rpmH_bact"/>
    <property type="match status" value="1"/>
</dbReference>
<dbReference type="PANTHER" id="PTHR14503:SF4">
    <property type="entry name" value="LARGE RIBOSOMAL SUBUNIT PROTEIN BL34M"/>
    <property type="match status" value="1"/>
</dbReference>
<dbReference type="PANTHER" id="PTHR14503">
    <property type="entry name" value="MITOCHONDRIAL RIBOSOMAL PROTEIN 34 FAMILY MEMBER"/>
    <property type="match status" value="1"/>
</dbReference>
<dbReference type="Pfam" id="PF00468">
    <property type="entry name" value="Ribosomal_L34"/>
    <property type="match status" value="1"/>
</dbReference>
<dbReference type="PROSITE" id="PS00784">
    <property type="entry name" value="RIBOSOMAL_L34"/>
    <property type="match status" value="1"/>
</dbReference>
<name>RL34_SHIBS</name>
<organism>
    <name type="scientific">Shigella boydii serotype 4 (strain Sb227)</name>
    <dbReference type="NCBI Taxonomy" id="300268"/>
    <lineage>
        <taxon>Bacteria</taxon>
        <taxon>Pseudomonadati</taxon>
        <taxon>Pseudomonadota</taxon>
        <taxon>Gammaproteobacteria</taxon>
        <taxon>Enterobacterales</taxon>
        <taxon>Enterobacteriaceae</taxon>
        <taxon>Shigella</taxon>
    </lineage>
</organism>
<feature type="chain" id="PRO_1000013447" description="Large ribosomal subunit protein bL34">
    <location>
        <begin position="1"/>
        <end position="46"/>
    </location>
</feature>
<accession>Q31UV6</accession>
<proteinExistence type="inferred from homology"/>
<keyword id="KW-0687">Ribonucleoprotein</keyword>
<keyword id="KW-0689">Ribosomal protein</keyword>
<comment type="similarity">
    <text evidence="1">Belongs to the bacterial ribosomal protein bL34 family.</text>
</comment>
<reference key="1">
    <citation type="journal article" date="2005" name="Nucleic Acids Res.">
        <title>Genome dynamics and diversity of Shigella species, the etiologic agents of bacillary dysentery.</title>
        <authorList>
            <person name="Yang F."/>
            <person name="Yang J."/>
            <person name="Zhang X."/>
            <person name="Chen L."/>
            <person name="Jiang Y."/>
            <person name="Yan Y."/>
            <person name="Tang X."/>
            <person name="Wang J."/>
            <person name="Xiong Z."/>
            <person name="Dong J."/>
            <person name="Xue Y."/>
            <person name="Zhu Y."/>
            <person name="Xu X."/>
            <person name="Sun L."/>
            <person name="Chen S."/>
            <person name="Nie H."/>
            <person name="Peng J."/>
            <person name="Xu J."/>
            <person name="Wang Y."/>
            <person name="Yuan Z."/>
            <person name="Wen Y."/>
            <person name="Yao Z."/>
            <person name="Shen Y."/>
            <person name="Qiang B."/>
            <person name="Hou Y."/>
            <person name="Yu J."/>
            <person name="Jin Q."/>
        </authorList>
    </citation>
    <scope>NUCLEOTIDE SEQUENCE [LARGE SCALE GENOMIC DNA]</scope>
    <source>
        <strain>Sb227</strain>
    </source>
</reference>
<gene>
    <name evidence="1" type="primary">rpmH</name>
    <name type="ordered locus">SBO_3674</name>
</gene>